<accession>A7UKV6</accession>
<proteinExistence type="inferred from homology"/>
<evidence type="ECO:0000250" key="1"/>
<evidence type="ECO:0000255" key="2"/>
<evidence type="ECO:0000255" key="3">
    <source>
        <dbReference type="PROSITE-ProRule" id="PRU01240"/>
    </source>
</evidence>
<evidence type="ECO:0000305" key="4"/>
<name>SUB4_TRIEQ</name>
<protein>
    <recommendedName>
        <fullName>Subtilisin-like protease 4</fullName>
        <ecNumber>3.4.21.-</ecNumber>
    </recommendedName>
</protein>
<feature type="signal peptide" evidence="2">
    <location>
        <begin position="1" status="less than"/>
        <end position="17"/>
    </location>
</feature>
<feature type="propeptide" id="PRO_0000380788" evidence="1">
    <location>
        <begin position="18"/>
        <end position="116"/>
    </location>
</feature>
<feature type="chain" id="PRO_0000380789" description="Subtilisin-like protease 4">
    <location>
        <begin position="117"/>
        <end position="394" status="greater than"/>
    </location>
</feature>
<feature type="domain" description="Inhibitor I9" evidence="2">
    <location>
        <begin position="36"/>
        <end position="115"/>
    </location>
</feature>
<feature type="domain" description="Peptidase S8" evidence="3">
    <location>
        <begin position="126"/>
        <end position="394"/>
    </location>
</feature>
<feature type="active site" description="Charge relay system" evidence="3">
    <location>
        <position position="158"/>
    </location>
</feature>
<feature type="active site" description="Charge relay system" evidence="3">
    <location>
        <position position="189"/>
    </location>
</feature>
<feature type="active site" description="Charge relay system" evidence="3">
    <location>
        <position position="344"/>
    </location>
</feature>
<feature type="glycosylation site" description="N-linked (GlcNAc...) asparagine" evidence="2">
    <location>
        <position position="100"/>
    </location>
</feature>
<feature type="glycosylation site" description="N-linked (GlcNAc...) asparagine" evidence="2">
    <location>
        <position position="250"/>
    </location>
</feature>
<feature type="glycosylation site" description="N-linked (GlcNAc...) asparagine" evidence="2">
    <location>
        <position position="306"/>
    </location>
</feature>
<feature type="non-terminal residue">
    <location>
        <position position="1"/>
    </location>
</feature>
<feature type="non-terminal residue">
    <location>
        <position position="394"/>
    </location>
</feature>
<dbReference type="EC" id="3.4.21.-"/>
<dbReference type="EMBL" id="EU076571">
    <property type="protein sequence ID" value="ABU50381.1"/>
    <property type="molecule type" value="Genomic_DNA"/>
</dbReference>
<dbReference type="SMR" id="A7UKV6"/>
<dbReference type="MEROPS" id="S08.115"/>
<dbReference type="GlyCosmos" id="A7UKV6">
    <property type="glycosylation" value="3 sites, No reported glycans"/>
</dbReference>
<dbReference type="VEuPathDB" id="FungiDB:TEQG_05150"/>
<dbReference type="GO" id="GO:0005576">
    <property type="term" value="C:extracellular region"/>
    <property type="evidence" value="ECO:0007669"/>
    <property type="project" value="UniProtKB-SubCell"/>
</dbReference>
<dbReference type="GO" id="GO:0004252">
    <property type="term" value="F:serine-type endopeptidase activity"/>
    <property type="evidence" value="ECO:0007669"/>
    <property type="project" value="InterPro"/>
</dbReference>
<dbReference type="GO" id="GO:0006508">
    <property type="term" value="P:proteolysis"/>
    <property type="evidence" value="ECO:0007669"/>
    <property type="project" value="UniProtKB-KW"/>
</dbReference>
<dbReference type="CDD" id="cd04077">
    <property type="entry name" value="Peptidases_S8_PCSK9_ProteinaseK_like"/>
    <property type="match status" value="1"/>
</dbReference>
<dbReference type="FunFam" id="3.40.50.200:FF:000014">
    <property type="entry name" value="Proteinase K"/>
    <property type="match status" value="1"/>
</dbReference>
<dbReference type="Gene3D" id="3.30.70.80">
    <property type="entry name" value="Peptidase S8 propeptide/proteinase inhibitor I9"/>
    <property type="match status" value="1"/>
</dbReference>
<dbReference type="Gene3D" id="3.40.50.200">
    <property type="entry name" value="Peptidase S8/S53 domain"/>
    <property type="match status" value="1"/>
</dbReference>
<dbReference type="InterPro" id="IPR034193">
    <property type="entry name" value="PCSK9_ProteinaseK-like"/>
</dbReference>
<dbReference type="InterPro" id="IPR000209">
    <property type="entry name" value="Peptidase_S8/S53_dom"/>
</dbReference>
<dbReference type="InterPro" id="IPR036852">
    <property type="entry name" value="Peptidase_S8/S53_dom_sf"/>
</dbReference>
<dbReference type="InterPro" id="IPR023828">
    <property type="entry name" value="Peptidase_S8_Ser-AS"/>
</dbReference>
<dbReference type="InterPro" id="IPR050131">
    <property type="entry name" value="Peptidase_S8_subtilisin-like"/>
</dbReference>
<dbReference type="InterPro" id="IPR015500">
    <property type="entry name" value="Peptidase_S8_subtilisin-rel"/>
</dbReference>
<dbReference type="InterPro" id="IPR010259">
    <property type="entry name" value="S8pro/Inhibitor_I9"/>
</dbReference>
<dbReference type="InterPro" id="IPR037045">
    <property type="entry name" value="S8pro/Inhibitor_I9_sf"/>
</dbReference>
<dbReference type="PANTHER" id="PTHR43806:SF11">
    <property type="entry name" value="CEREVISIN-RELATED"/>
    <property type="match status" value="1"/>
</dbReference>
<dbReference type="PANTHER" id="PTHR43806">
    <property type="entry name" value="PEPTIDASE S8"/>
    <property type="match status" value="1"/>
</dbReference>
<dbReference type="Pfam" id="PF05922">
    <property type="entry name" value="Inhibitor_I9"/>
    <property type="match status" value="1"/>
</dbReference>
<dbReference type="Pfam" id="PF00082">
    <property type="entry name" value="Peptidase_S8"/>
    <property type="match status" value="1"/>
</dbReference>
<dbReference type="PRINTS" id="PR00723">
    <property type="entry name" value="SUBTILISIN"/>
</dbReference>
<dbReference type="SUPFAM" id="SSF54897">
    <property type="entry name" value="Protease propeptides/inhibitors"/>
    <property type="match status" value="1"/>
</dbReference>
<dbReference type="SUPFAM" id="SSF52743">
    <property type="entry name" value="Subtilisin-like"/>
    <property type="match status" value="1"/>
</dbReference>
<dbReference type="PROSITE" id="PS51892">
    <property type="entry name" value="SUBTILASE"/>
    <property type="match status" value="1"/>
</dbReference>
<dbReference type="PROSITE" id="PS00138">
    <property type="entry name" value="SUBTILASE_SER"/>
    <property type="match status" value="1"/>
</dbReference>
<gene>
    <name type="primary">SUB4</name>
</gene>
<organism>
    <name type="scientific">Trichophyton equinum</name>
    <name type="common">Horse ringworm fungus</name>
    <dbReference type="NCBI Taxonomy" id="63418"/>
    <lineage>
        <taxon>Eukaryota</taxon>
        <taxon>Fungi</taxon>
        <taxon>Dikarya</taxon>
        <taxon>Ascomycota</taxon>
        <taxon>Pezizomycotina</taxon>
        <taxon>Eurotiomycetes</taxon>
        <taxon>Eurotiomycetidae</taxon>
        <taxon>Onygenales</taxon>
        <taxon>Arthrodermataceae</taxon>
        <taxon>Trichophyton</taxon>
    </lineage>
</organism>
<reference key="1">
    <citation type="submission" date="2007-08" db="EMBL/GenBank/DDBJ databases">
        <title>Comparing putative pathogenicity factors between Trichophyton tonsurans and Trichophyton equinum.</title>
        <authorList>
            <person name="Brown J.T."/>
            <person name="Preuett B.L."/>
            <person name="Abdel-Rahman S.M."/>
        </authorList>
    </citation>
    <scope>NUCLEOTIDE SEQUENCE [GENOMIC DNA]</scope>
</reference>
<keyword id="KW-0325">Glycoprotein</keyword>
<keyword id="KW-0378">Hydrolase</keyword>
<keyword id="KW-0645">Protease</keyword>
<keyword id="KW-0964">Secreted</keyword>
<keyword id="KW-0720">Serine protease</keyword>
<keyword id="KW-0732">Signal</keyword>
<keyword id="KW-0843">Virulence</keyword>
<keyword id="KW-0865">Zymogen</keyword>
<comment type="function">
    <text evidence="1">Secreted subtilisin-like serine protease with keratinolytic activity that contributes to pathogenicity.</text>
</comment>
<comment type="subcellular location">
    <subcellularLocation>
        <location evidence="1">Secreted</location>
    </subcellularLocation>
</comment>
<comment type="similarity">
    <text evidence="4">Belongs to the peptidase S8 family.</text>
</comment>
<sequence length="394" mass="41614">CLKTLSVFLAAFAAADARAVFKTQGHKNSEMIPDNYIVVMKDGVSQDDFKAHVSSVASIHSTNKAKRGTNTEGMKREFDIMNWRGYHGHFDRDTLEEILNDSKVDYVEQDQVVRISGLVTQRGAPSWGLGRVSHRQAGSRDYVFDDSAGRGVTIYGVDTGIDINHQDFRGRARWGTNTADRDNADRHGHGTHTASTFAGTAYGIAKNANIVAVKVLSSDGSGSTSGIIAGINYCVQDAQQRGILGKAAMNLSLGGGFSQANNDAVTRAQNAGIFVAVAAGNDNRDARNYSPASAPAVCTVASSTINDSKSSFSNWGPVVDIYAPGSDIIAARPGGGSTTMSGTSMASPHVAGMGAYMIGLGADPRSLCDRLKQLATPAIRNPGSSTTNRLLYNG</sequence>